<feature type="chain" id="PRO_1000095955" description="S-adenosylmethionine synthase">
    <location>
        <begin position="1"/>
        <end position="405"/>
    </location>
</feature>
<feature type="binding site" evidence="1">
    <location>
        <begin position="141"/>
        <end position="146"/>
    </location>
    <ligand>
        <name>ATP</name>
        <dbReference type="ChEBI" id="CHEBI:30616"/>
    </ligand>
</feature>
<evidence type="ECO:0000255" key="1">
    <source>
        <dbReference type="HAMAP-Rule" id="MF_00136"/>
    </source>
</evidence>
<reference key="1">
    <citation type="submission" date="2007-10" db="EMBL/GenBank/DDBJ databases">
        <title>Complete sequence of Methanococcus maripaludis C6.</title>
        <authorList>
            <consortium name="US DOE Joint Genome Institute"/>
            <person name="Copeland A."/>
            <person name="Lucas S."/>
            <person name="Lapidus A."/>
            <person name="Barry K."/>
            <person name="Glavina del Rio T."/>
            <person name="Dalin E."/>
            <person name="Tice H."/>
            <person name="Pitluck S."/>
            <person name="Clum A."/>
            <person name="Schmutz J."/>
            <person name="Larimer F."/>
            <person name="Land M."/>
            <person name="Hauser L."/>
            <person name="Kyrpides N."/>
            <person name="Mikhailova N."/>
            <person name="Sieprawska-Lupa M."/>
            <person name="Whitman W.B."/>
            <person name="Richardson P."/>
        </authorList>
    </citation>
    <scope>NUCLEOTIDE SEQUENCE [LARGE SCALE GENOMIC DNA]</scope>
    <source>
        <strain>C6 / ATCC BAA-1332</strain>
    </source>
</reference>
<gene>
    <name evidence="1" type="primary">mat</name>
    <name type="ordered locus">MmarC6_1031</name>
</gene>
<proteinExistence type="inferred from homology"/>
<organism>
    <name type="scientific">Methanococcus maripaludis (strain C6 / ATCC BAA-1332)</name>
    <dbReference type="NCBI Taxonomy" id="444158"/>
    <lineage>
        <taxon>Archaea</taxon>
        <taxon>Methanobacteriati</taxon>
        <taxon>Methanobacteriota</taxon>
        <taxon>Methanomada group</taxon>
        <taxon>Methanococci</taxon>
        <taxon>Methanococcales</taxon>
        <taxon>Methanococcaceae</taxon>
        <taxon>Methanococcus</taxon>
    </lineage>
</organism>
<protein>
    <recommendedName>
        <fullName evidence="1">S-adenosylmethionine synthase</fullName>
        <shortName evidence="1">AdoMet synthase</shortName>
        <ecNumber evidence="1">2.5.1.6</ecNumber>
    </recommendedName>
    <alternativeName>
        <fullName evidence="1">Methionine adenosyltransferase</fullName>
    </alternativeName>
</protein>
<dbReference type="EC" id="2.5.1.6" evidence="1"/>
<dbReference type="EMBL" id="CP000867">
    <property type="protein sequence ID" value="ABX01846.1"/>
    <property type="molecule type" value="Genomic_DNA"/>
</dbReference>
<dbReference type="SMR" id="A9A923"/>
<dbReference type="STRING" id="444158.MmarC6_1031"/>
<dbReference type="KEGG" id="mmx:MmarC6_1031"/>
<dbReference type="eggNOG" id="arCOG01678">
    <property type="taxonomic scope" value="Archaea"/>
</dbReference>
<dbReference type="HOGENOM" id="CLU_057642_0_0_2"/>
<dbReference type="OrthoDB" id="204488at2157"/>
<dbReference type="PhylomeDB" id="A9A923"/>
<dbReference type="UniPathway" id="UPA00315">
    <property type="reaction ID" value="UER00080"/>
</dbReference>
<dbReference type="GO" id="GO:0005524">
    <property type="term" value="F:ATP binding"/>
    <property type="evidence" value="ECO:0007669"/>
    <property type="project" value="UniProtKB-UniRule"/>
</dbReference>
<dbReference type="GO" id="GO:0000287">
    <property type="term" value="F:magnesium ion binding"/>
    <property type="evidence" value="ECO:0007669"/>
    <property type="project" value="UniProtKB-UniRule"/>
</dbReference>
<dbReference type="GO" id="GO:0004478">
    <property type="term" value="F:methionine adenosyltransferase activity"/>
    <property type="evidence" value="ECO:0007669"/>
    <property type="project" value="UniProtKB-UniRule"/>
</dbReference>
<dbReference type="GO" id="GO:0006730">
    <property type="term" value="P:one-carbon metabolic process"/>
    <property type="evidence" value="ECO:0007669"/>
    <property type="project" value="UniProtKB-KW"/>
</dbReference>
<dbReference type="GO" id="GO:0006556">
    <property type="term" value="P:S-adenosylmethionine biosynthetic process"/>
    <property type="evidence" value="ECO:0007669"/>
    <property type="project" value="UniProtKB-UniRule"/>
</dbReference>
<dbReference type="Gene3D" id="3.30.300.10">
    <property type="match status" value="1"/>
</dbReference>
<dbReference type="Gene3D" id="3.30.300.280">
    <property type="entry name" value="S-adenosylmethionine synthetase, C-terminal domain"/>
    <property type="match status" value="2"/>
</dbReference>
<dbReference type="HAMAP" id="MF_00136">
    <property type="entry name" value="S_AdoMet_synth2"/>
    <property type="match status" value="1"/>
</dbReference>
<dbReference type="InterPro" id="IPR027790">
    <property type="entry name" value="AdoMet_synthase_2_family"/>
</dbReference>
<dbReference type="InterPro" id="IPR042544">
    <property type="entry name" value="AdoMet_synthase_3"/>
</dbReference>
<dbReference type="InterPro" id="IPR002795">
    <property type="entry name" value="S-AdoMet_synthetase_arc"/>
</dbReference>
<dbReference type="NCBIfam" id="NF003364">
    <property type="entry name" value="PRK04439.1-3"/>
    <property type="match status" value="1"/>
</dbReference>
<dbReference type="NCBIfam" id="NF003366">
    <property type="entry name" value="PRK04439.1-5"/>
    <property type="match status" value="1"/>
</dbReference>
<dbReference type="PANTHER" id="PTHR36697">
    <property type="entry name" value="S-ADENOSYLMETHIONINE SYNTHASE"/>
    <property type="match status" value="1"/>
</dbReference>
<dbReference type="PANTHER" id="PTHR36697:SF1">
    <property type="entry name" value="S-ADENOSYLMETHIONINE SYNTHASE"/>
    <property type="match status" value="1"/>
</dbReference>
<dbReference type="Pfam" id="PF01941">
    <property type="entry name" value="AdoMet_Synthase"/>
    <property type="match status" value="1"/>
</dbReference>
<name>METK_METM6</name>
<keyword id="KW-0067">ATP-binding</keyword>
<keyword id="KW-0460">Magnesium</keyword>
<keyword id="KW-0547">Nucleotide-binding</keyword>
<keyword id="KW-0554">One-carbon metabolism</keyword>
<keyword id="KW-0808">Transferase</keyword>
<comment type="function">
    <text evidence="1">Catalyzes the formation of S-adenosylmethionine from methionine and ATP.</text>
</comment>
<comment type="catalytic activity">
    <reaction evidence="1">
        <text>L-methionine + ATP + H2O = S-adenosyl-L-methionine + phosphate + diphosphate</text>
        <dbReference type="Rhea" id="RHEA:21080"/>
        <dbReference type="ChEBI" id="CHEBI:15377"/>
        <dbReference type="ChEBI" id="CHEBI:30616"/>
        <dbReference type="ChEBI" id="CHEBI:33019"/>
        <dbReference type="ChEBI" id="CHEBI:43474"/>
        <dbReference type="ChEBI" id="CHEBI:57844"/>
        <dbReference type="ChEBI" id="CHEBI:59789"/>
        <dbReference type="EC" id="2.5.1.6"/>
    </reaction>
</comment>
<comment type="cofactor">
    <cofactor evidence="1">
        <name>Mg(2+)</name>
        <dbReference type="ChEBI" id="CHEBI:18420"/>
    </cofactor>
</comment>
<comment type="pathway">
    <text evidence="1">Amino-acid biosynthesis; S-adenosyl-L-methionine biosynthesis; S-adenosyl-L-methionine from L-methionine: step 1/1.</text>
</comment>
<comment type="similarity">
    <text evidence="1">Belongs to the AdoMet synthase 2 family.</text>
</comment>
<accession>A9A923</accession>
<sequence>MANIVVKRLERTPIDETPVEIVERKGMGHPDSICDGIAESVSVALCKMYKEKMGVVLHHNTDQVELVGGYAYPEVGGGCMVSPIYILLSGRATMEVLDKEAGKVIKLPVNTTAVNAARDYLKKAIRNMDLEKDVVVDCRIGQGSVDLVEVFDRKRSEIPHANDTSFGVGHAPLSTTEKIVLETEKLLNSDALKAEIPAVGEDIKVMGLREGKKITLTIAMAAVDKYVNSCADYVKVKELAKAKVEENAKKYLDGHELEVCINTADDDEDCIFLTVTGTSAEMGDDGSVGRGNRANGLITPFRPMSMEATSGKNPINHIGKIYNILSNIIAEDVAKIEGVRECQIRILSQIGKPITEPKILDIEMIPENGFELEELSPKAKEVAQKWLDNISEVTERIVSGNVTTF</sequence>